<accession>Q9UZT4</accession>
<accession>G8ZJL3</accession>
<organism>
    <name type="scientific">Pyrococcus abyssi (strain GE5 / Orsay)</name>
    <dbReference type="NCBI Taxonomy" id="272844"/>
    <lineage>
        <taxon>Archaea</taxon>
        <taxon>Methanobacteriati</taxon>
        <taxon>Methanobacteriota</taxon>
        <taxon>Thermococci</taxon>
        <taxon>Thermococcales</taxon>
        <taxon>Thermococcaceae</taxon>
        <taxon>Pyrococcus</taxon>
    </lineage>
</organism>
<dbReference type="EMBL" id="AJ248286">
    <property type="protein sequence ID" value="CAB49972.1"/>
    <property type="molecule type" value="Genomic_DNA"/>
</dbReference>
<dbReference type="EMBL" id="HE613800">
    <property type="protein sequence ID" value="CCE70472.1"/>
    <property type="molecule type" value="Genomic_DNA"/>
</dbReference>
<dbReference type="PIR" id="G75083">
    <property type="entry name" value="G75083"/>
</dbReference>
<dbReference type="RefSeq" id="WP_010868180.1">
    <property type="nucleotide sequence ID" value="NC_000868.1"/>
</dbReference>
<dbReference type="SMR" id="Q9UZT4"/>
<dbReference type="STRING" id="272844.PAB1665"/>
<dbReference type="KEGG" id="pab:PAB1665"/>
<dbReference type="PATRIC" id="fig|272844.11.peg.1117"/>
<dbReference type="eggNOG" id="arCOG01982">
    <property type="taxonomic scope" value="Archaea"/>
</dbReference>
<dbReference type="HOGENOM" id="CLU_075239_1_0_2"/>
<dbReference type="OrthoDB" id="38543at2157"/>
<dbReference type="PhylomeDB" id="Q9UZT4"/>
<dbReference type="Proteomes" id="UP000000810">
    <property type="component" value="Chromosome"/>
</dbReference>
<dbReference type="Proteomes" id="UP000009139">
    <property type="component" value="Chromosome"/>
</dbReference>
<dbReference type="CDD" id="cd04722">
    <property type="entry name" value="TIM_phosphate_binding"/>
    <property type="match status" value="1"/>
</dbReference>
<dbReference type="InterPro" id="IPR005137">
    <property type="entry name" value="BtpA"/>
</dbReference>
<dbReference type="InterPro" id="IPR011060">
    <property type="entry name" value="RibuloseP-bd_barrel"/>
</dbReference>
<dbReference type="NCBIfam" id="TIGR00259">
    <property type="entry name" value="thylakoid_BtpA"/>
    <property type="match status" value="1"/>
</dbReference>
<dbReference type="PANTHER" id="PTHR21381:SF3">
    <property type="entry name" value="SGC REGION PROTEIN SGCQ-RELATED"/>
    <property type="match status" value="1"/>
</dbReference>
<dbReference type="PANTHER" id="PTHR21381">
    <property type="entry name" value="ZGC:162297"/>
    <property type="match status" value="1"/>
</dbReference>
<dbReference type="Pfam" id="PF03437">
    <property type="entry name" value="BtpA"/>
    <property type="match status" value="1"/>
</dbReference>
<dbReference type="PIRSF" id="PIRSF005956">
    <property type="entry name" value="BtpA"/>
    <property type="match status" value="1"/>
</dbReference>
<dbReference type="SUPFAM" id="SSF51366">
    <property type="entry name" value="Ribulose-phoshate binding barrel"/>
    <property type="match status" value="1"/>
</dbReference>
<protein>
    <recommendedName>
        <fullName>Uncharacterized protein PYRAB10620</fullName>
    </recommendedName>
</protein>
<reference key="1">
    <citation type="journal article" date="2003" name="Mol. Microbiol.">
        <title>An integrated analysis of the genome of the hyperthermophilic archaeon Pyrococcus abyssi.</title>
        <authorList>
            <person name="Cohen G.N."/>
            <person name="Barbe V."/>
            <person name="Flament D."/>
            <person name="Galperin M."/>
            <person name="Heilig R."/>
            <person name="Lecompte O."/>
            <person name="Poch O."/>
            <person name="Prieur D."/>
            <person name="Querellou J."/>
            <person name="Ripp R."/>
            <person name="Thierry J.-C."/>
            <person name="Van der Oost J."/>
            <person name="Weissenbach J."/>
            <person name="Zivanovic Y."/>
            <person name="Forterre P."/>
        </authorList>
    </citation>
    <scope>NUCLEOTIDE SEQUENCE [LARGE SCALE GENOMIC DNA]</scope>
    <source>
        <strain>GE5 / Orsay</strain>
    </source>
</reference>
<reference key="2">
    <citation type="journal article" date="2012" name="Curr. Microbiol.">
        <title>Re-annotation of two hyperthermophilic archaea Pyrococcus abyssi GE5 and Pyrococcus furiosus DSM 3638.</title>
        <authorList>
            <person name="Gao J."/>
            <person name="Wang J."/>
        </authorList>
    </citation>
    <scope>GENOME REANNOTATION</scope>
    <source>
        <strain>GE5 / Orsay</strain>
    </source>
</reference>
<feature type="chain" id="PRO_0000159332" description="Uncharacterized protein PYRAB10620">
    <location>
        <begin position="1"/>
        <end position="259"/>
    </location>
</feature>
<comment type="similarity">
    <text evidence="1">Belongs to the BtpA family.</text>
</comment>
<gene>
    <name type="ordered locus">PYRAB10620</name>
    <name type="ORF">PAB1665</name>
</gene>
<sequence length="259" mass="28108">MDLGSKPLIGVVHLLPLPGSPGYRGSIEEILDRAISDAAKYQEAGFDAIILENYGDFPYSKTISKETLASFAVIAKEVGREISIPIGINVLRNDCVASYSIAYSVRADFIRVNVLTGVAFTDQGIIEGCARELAELRARLPSRIKVLADVHVKHATHFSSFEVALLDTVERGGADAVIITGSRTGSEVDIQELMLAKKISPVPVIVGSGLNPRNIRLFWRYADGFIVGTWVKEGGKTLNEVSLERATRIAKVVKSLRGE</sequence>
<proteinExistence type="inferred from homology"/>
<name>Y1062_PYRAB</name>
<evidence type="ECO:0000305" key="1"/>